<feature type="chain" id="PRO_0000345588" description="Small ribosomal subunit protein bS18c">
    <location>
        <begin position="1"/>
        <end position="108"/>
    </location>
</feature>
<feature type="region of interest" description="Disordered" evidence="2">
    <location>
        <begin position="1"/>
        <end position="23"/>
    </location>
</feature>
<feature type="region of interest" description="Disordered" evidence="2">
    <location>
        <begin position="83"/>
        <end position="108"/>
    </location>
</feature>
<feature type="compositionally biased region" description="Basic residues" evidence="2">
    <location>
        <begin position="1"/>
        <end position="19"/>
    </location>
</feature>
<feature type="compositionally biased region" description="Basic residues" evidence="2">
    <location>
        <begin position="97"/>
        <end position="108"/>
    </location>
</feature>
<gene>
    <name evidence="1" type="primary">rps18</name>
</gene>
<sequence length="108" mass="12716">MDKSKRTFRKSKRSFRRRLPPIGSGDRIDYRNMSLISRFISEQGKILSRRVNRLTLKQQRLITIAIKQARILSSLPFLNNEKQFERTESTPRTTGTRARKKKIGLLLN</sequence>
<protein>
    <recommendedName>
        <fullName evidence="1">Small ribosomal subunit protein bS18c</fullName>
    </recommendedName>
    <alternativeName>
        <fullName evidence="3">30S ribosomal protein S18, chloroplastic</fullName>
    </alternativeName>
</protein>
<comment type="subunit">
    <text evidence="1">Part of the 30S ribosomal subunit.</text>
</comment>
<comment type="subcellular location">
    <subcellularLocation>
        <location>Plastid</location>
        <location>Chloroplast</location>
    </subcellularLocation>
</comment>
<comment type="similarity">
    <text evidence="1">Belongs to the bacterial ribosomal protein bS18 family.</text>
</comment>
<reference key="1">
    <citation type="journal article" date="2007" name="Mol. Phylogenet. Evol.">
        <title>Phylogenetic and evolutionary implications of complete chloroplast genome sequences of four early-diverging angiosperms: Buxus (Buxaceae), Chloranthus (Chloranthaceae), Dioscorea (Dioscoreaceae), and Illicium (Schisandraceae).</title>
        <authorList>
            <person name="Hansen D.R."/>
            <person name="Dastidar S.G."/>
            <person name="Cai Z."/>
            <person name="Penaflor C."/>
            <person name="Kuehl J.V."/>
            <person name="Boore J.L."/>
            <person name="Jansen R.K."/>
        </authorList>
    </citation>
    <scope>NUCLEOTIDE SEQUENCE [LARGE SCALE GENOMIC DNA]</scope>
</reference>
<accession>A6MMW6</accession>
<dbReference type="EMBL" id="EF380354">
    <property type="protein sequence ID" value="ABQ52541.1"/>
    <property type="molecule type" value="Genomic_DNA"/>
</dbReference>
<dbReference type="RefSeq" id="YP_001294292.1">
    <property type="nucleotide sequence ID" value="NC_009600.1"/>
</dbReference>
<dbReference type="SMR" id="A6MMW6"/>
<dbReference type="GeneID" id="5236771"/>
<dbReference type="GO" id="GO:0009507">
    <property type="term" value="C:chloroplast"/>
    <property type="evidence" value="ECO:0007669"/>
    <property type="project" value="UniProtKB-SubCell"/>
</dbReference>
<dbReference type="GO" id="GO:0005763">
    <property type="term" value="C:mitochondrial small ribosomal subunit"/>
    <property type="evidence" value="ECO:0007669"/>
    <property type="project" value="TreeGrafter"/>
</dbReference>
<dbReference type="GO" id="GO:0070181">
    <property type="term" value="F:small ribosomal subunit rRNA binding"/>
    <property type="evidence" value="ECO:0007669"/>
    <property type="project" value="TreeGrafter"/>
</dbReference>
<dbReference type="GO" id="GO:0003735">
    <property type="term" value="F:structural constituent of ribosome"/>
    <property type="evidence" value="ECO:0007669"/>
    <property type="project" value="InterPro"/>
</dbReference>
<dbReference type="GO" id="GO:0006412">
    <property type="term" value="P:translation"/>
    <property type="evidence" value="ECO:0007669"/>
    <property type="project" value="UniProtKB-UniRule"/>
</dbReference>
<dbReference type="FunFam" id="4.10.640.10:FF:000002">
    <property type="entry name" value="30S ribosomal protein S18, chloroplastic"/>
    <property type="match status" value="1"/>
</dbReference>
<dbReference type="Gene3D" id="4.10.640.10">
    <property type="entry name" value="Ribosomal protein S18"/>
    <property type="match status" value="1"/>
</dbReference>
<dbReference type="HAMAP" id="MF_00270">
    <property type="entry name" value="Ribosomal_bS18"/>
    <property type="match status" value="1"/>
</dbReference>
<dbReference type="InterPro" id="IPR001648">
    <property type="entry name" value="Ribosomal_bS18"/>
</dbReference>
<dbReference type="InterPro" id="IPR018275">
    <property type="entry name" value="Ribosomal_bS18_CS"/>
</dbReference>
<dbReference type="InterPro" id="IPR036870">
    <property type="entry name" value="Ribosomal_bS18_sf"/>
</dbReference>
<dbReference type="NCBIfam" id="TIGR00165">
    <property type="entry name" value="S18"/>
    <property type="match status" value="1"/>
</dbReference>
<dbReference type="PANTHER" id="PTHR13479">
    <property type="entry name" value="30S RIBOSOMAL PROTEIN S18"/>
    <property type="match status" value="1"/>
</dbReference>
<dbReference type="PANTHER" id="PTHR13479:SF40">
    <property type="entry name" value="SMALL RIBOSOMAL SUBUNIT PROTEIN BS18M"/>
    <property type="match status" value="1"/>
</dbReference>
<dbReference type="Pfam" id="PF01084">
    <property type="entry name" value="Ribosomal_S18"/>
    <property type="match status" value="1"/>
</dbReference>
<dbReference type="PRINTS" id="PR00974">
    <property type="entry name" value="RIBOSOMALS18"/>
</dbReference>
<dbReference type="SUPFAM" id="SSF46911">
    <property type="entry name" value="Ribosomal protein S18"/>
    <property type="match status" value="1"/>
</dbReference>
<dbReference type="PROSITE" id="PS00057">
    <property type="entry name" value="RIBOSOMAL_S18"/>
    <property type="match status" value="1"/>
</dbReference>
<geneLocation type="chloroplast"/>
<keyword id="KW-0150">Chloroplast</keyword>
<keyword id="KW-0934">Plastid</keyword>
<keyword id="KW-0687">Ribonucleoprotein</keyword>
<keyword id="KW-0689">Ribosomal protein</keyword>
<keyword id="KW-0694">RNA-binding</keyword>
<keyword id="KW-0699">rRNA-binding</keyword>
<evidence type="ECO:0000255" key="1">
    <source>
        <dbReference type="HAMAP-Rule" id="MF_00270"/>
    </source>
</evidence>
<evidence type="ECO:0000256" key="2">
    <source>
        <dbReference type="SAM" id="MobiDB-lite"/>
    </source>
</evidence>
<evidence type="ECO:0000305" key="3"/>
<name>RR18_ILLOL</name>
<organism>
    <name type="scientific">Illicium oligandrum</name>
    <name type="common">Star anise</name>
    <dbReference type="NCBI Taxonomy" id="145286"/>
    <lineage>
        <taxon>Eukaryota</taxon>
        <taxon>Viridiplantae</taxon>
        <taxon>Streptophyta</taxon>
        <taxon>Embryophyta</taxon>
        <taxon>Tracheophyta</taxon>
        <taxon>Spermatophyta</taxon>
        <taxon>Magnoliopsida</taxon>
        <taxon>Austrobaileyales</taxon>
        <taxon>Schisandraceae</taxon>
        <taxon>Illicium</taxon>
    </lineage>
</organism>
<proteinExistence type="inferred from homology"/>